<keyword id="KW-0687">Ribonucleoprotein</keyword>
<keyword id="KW-0689">Ribosomal protein</keyword>
<protein>
    <recommendedName>
        <fullName evidence="1">Small ribosomal subunit protein bS16</fullName>
    </recommendedName>
    <alternativeName>
        <fullName evidence="2">30S ribosomal protein S16</fullName>
    </alternativeName>
</protein>
<comment type="similarity">
    <text evidence="1">Belongs to the bacterial ribosomal protein bS16 family.</text>
</comment>
<dbReference type="EMBL" id="AE002160">
    <property type="protein sequence ID" value="AAF73544.1"/>
    <property type="molecule type" value="Genomic_DNA"/>
</dbReference>
<dbReference type="RefSeq" id="WP_010230065.1">
    <property type="nucleotide sequence ID" value="NZ_CP063055.1"/>
</dbReference>
<dbReference type="SMR" id="Q9PL13"/>
<dbReference type="GeneID" id="1246465"/>
<dbReference type="KEGG" id="cmu:TC_0295"/>
<dbReference type="eggNOG" id="COG0228">
    <property type="taxonomic scope" value="Bacteria"/>
</dbReference>
<dbReference type="HOGENOM" id="CLU_100590_3_1_0"/>
<dbReference type="OrthoDB" id="9807878at2"/>
<dbReference type="Proteomes" id="UP000000800">
    <property type="component" value="Chromosome"/>
</dbReference>
<dbReference type="GO" id="GO:0005737">
    <property type="term" value="C:cytoplasm"/>
    <property type="evidence" value="ECO:0007669"/>
    <property type="project" value="UniProtKB-ARBA"/>
</dbReference>
<dbReference type="GO" id="GO:0015935">
    <property type="term" value="C:small ribosomal subunit"/>
    <property type="evidence" value="ECO:0007669"/>
    <property type="project" value="TreeGrafter"/>
</dbReference>
<dbReference type="GO" id="GO:0003735">
    <property type="term" value="F:structural constituent of ribosome"/>
    <property type="evidence" value="ECO:0007669"/>
    <property type="project" value="InterPro"/>
</dbReference>
<dbReference type="GO" id="GO:0006412">
    <property type="term" value="P:translation"/>
    <property type="evidence" value="ECO:0007669"/>
    <property type="project" value="UniProtKB-UniRule"/>
</dbReference>
<dbReference type="Gene3D" id="3.30.1320.10">
    <property type="match status" value="1"/>
</dbReference>
<dbReference type="HAMAP" id="MF_00385">
    <property type="entry name" value="Ribosomal_bS16"/>
    <property type="match status" value="1"/>
</dbReference>
<dbReference type="InterPro" id="IPR000307">
    <property type="entry name" value="Ribosomal_bS16"/>
</dbReference>
<dbReference type="InterPro" id="IPR023803">
    <property type="entry name" value="Ribosomal_bS16_dom_sf"/>
</dbReference>
<dbReference type="NCBIfam" id="NF011095">
    <property type="entry name" value="PRK14522.1"/>
    <property type="match status" value="1"/>
</dbReference>
<dbReference type="NCBIfam" id="TIGR00002">
    <property type="entry name" value="S16"/>
    <property type="match status" value="1"/>
</dbReference>
<dbReference type="PANTHER" id="PTHR12919">
    <property type="entry name" value="30S RIBOSOMAL PROTEIN S16"/>
    <property type="match status" value="1"/>
</dbReference>
<dbReference type="PANTHER" id="PTHR12919:SF20">
    <property type="entry name" value="SMALL RIBOSOMAL SUBUNIT PROTEIN BS16M"/>
    <property type="match status" value="1"/>
</dbReference>
<dbReference type="Pfam" id="PF00886">
    <property type="entry name" value="Ribosomal_S16"/>
    <property type="match status" value="1"/>
</dbReference>
<dbReference type="SUPFAM" id="SSF54565">
    <property type="entry name" value="Ribosomal protein S16"/>
    <property type="match status" value="1"/>
</dbReference>
<sequence length="116" mass="13453">MALKIRLRQQGRKNHVVYRLVLADVESPRDGKYIELLGWYDPHSEQNYQLKSERIFYWLNQGAELTEKAGALVKQGAPGVYAELMAKKNARRAVVRQKRRAYRQRLAARRAEAAAK</sequence>
<gene>
    <name evidence="1" type="primary">rpsP</name>
    <name type="ordered locus">TC_0295</name>
</gene>
<reference key="1">
    <citation type="journal article" date="2000" name="Nucleic Acids Res.">
        <title>Genome sequences of Chlamydia trachomatis MoPn and Chlamydia pneumoniae AR39.</title>
        <authorList>
            <person name="Read T.D."/>
            <person name="Brunham R.C."/>
            <person name="Shen C."/>
            <person name="Gill S.R."/>
            <person name="Heidelberg J.F."/>
            <person name="White O."/>
            <person name="Hickey E.K."/>
            <person name="Peterson J.D."/>
            <person name="Utterback T.R."/>
            <person name="Berry K.J."/>
            <person name="Bass S."/>
            <person name="Linher K.D."/>
            <person name="Weidman J.F."/>
            <person name="Khouri H.M."/>
            <person name="Craven B."/>
            <person name="Bowman C."/>
            <person name="Dodson R.J."/>
            <person name="Gwinn M.L."/>
            <person name="Nelson W.C."/>
            <person name="DeBoy R.T."/>
            <person name="Kolonay J.F."/>
            <person name="McClarty G."/>
            <person name="Salzberg S.L."/>
            <person name="Eisen J.A."/>
            <person name="Fraser C.M."/>
        </authorList>
    </citation>
    <scope>NUCLEOTIDE SEQUENCE [LARGE SCALE GENOMIC DNA]</scope>
    <source>
        <strain>MoPn / Nigg</strain>
    </source>
</reference>
<proteinExistence type="inferred from homology"/>
<accession>Q9PL13</accession>
<feature type="chain" id="PRO_0000167171" description="Small ribosomal subunit protein bS16">
    <location>
        <begin position="1"/>
        <end position="116"/>
    </location>
</feature>
<evidence type="ECO:0000255" key="1">
    <source>
        <dbReference type="HAMAP-Rule" id="MF_00385"/>
    </source>
</evidence>
<evidence type="ECO:0000305" key="2"/>
<name>RS16_CHLMU</name>
<organism>
    <name type="scientific">Chlamydia muridarum (strain MoPn / Nigg)</name>
    <dbReference type="NCBI Taxonomy" id="243161"/>
    <lineage>
        <taxon>Bacteria</taxon>
        <taxon>Pseudomonadati</taxon>
        <taxon>Chlamydiota</taxon>
        <taxon>Chlamydiia</taxon>
        <taxon>Chlamydiales</taxon>
        <taxon>Chlamydiaceae</taxon>
        <taxon>Chlamydia/Chlamydophila group</taxon>
        <taxon>Chlamydia</taxon>
    </lineage>
</organism>